<dbReference type="EC" id="3.6.4.-"/>
<dbReference type="EMBL" id="L22579">
    <property type="protein sequence ID" value="AAA60844.1"/>
    <property type="molecule type" value="Genomic_DNA"/>
</dbReference>
<dbReference type="EMBL" id="Y16780">
    <property type="protein sequence ID" value="CAB54696.1"/>
    <property type="molecule type" value="Genomic_DNA"/>
</dbReference>
<dbReference type="PIR" id="F72162">
    <property type="entry name" value="F72162"/>
</dbReference>
<dbReference type="PIR" id="T28534">
    <property type="entry name" value="T28534"/>
</dbReference>
<dbReference type="SMR" id="P0DOO0"/>
<dbReference type="Proteomes" id="UP000111493">
    <property type="component" value="Segment"/>
</dbReference>
<dbReference type="Proteomes" id="UP000119805">
    <property type="component" value="Segment"/>
</dbReference>
<dbReference type="GO" id="GO:0044423">
    <property type="term" value="C:virion component"/>
    <property type="evidence" value="ECO:0007669"/>
    <property type="project" value="UniProtKB-KW"/>
</dbReference>
<dbReference type="GO" id="GO:0005524">
    <property type="term" value="F:ATP binding"/>
    <property type="evidence" value="ECO:0007669"/>
    <property type="project" value="UniProtKB-KW"/>
</dbReference>
<dbReference type="GO" id="GO:0003677">
    <property type="term" value="F:DNA binding"/>
    <property type="evidence" value="ECO:0007669"/>
    <property type="project" value="UniProtKB-KW"/>
</dbReference>
<dbReference type="GO" id="GO:0004386">
    <property type="term" value="F:helicase activity"/>
    <property type="evidence" value="ECO:0007669"/>
    <property type="project" value="UniProtKB-KW"/>
</dbReference>
<dbReference type="GO" id="GO:0016787">
    <property type="term" value="F:hydrolase activity"/>
    <property type="evidence" value="ECO:0007669"/>
    <property type="project" value="UniProtKB-KW"/>
</dbReference>
<dbReference type="CDD" id="cd18785">
    <property type="entry name" value="SF2_C"/>
    <property type="match status" value="1"/>
</dbReference>
<dbReference type="FunFam" id="3.40.50.300:FF:001785">
    <property type="entry name" value="Early gene transcription factor VETF small subunit"/>
    <property type="match status" value="1"/>
</dbReference>
<dbReference type="Gene3D" id="3.40.50.300">
    <property type="entry name" value="P-loop containing nucleotide triphosphate hydrolases"/>
    <property type="match status" value="2"/>
</dbReference>
<dbReference type="InterPro" id="IPR006935">
    <property type="entry name" value="Helicase/UvrB_N"/>
</dbReference>
<dbReference type="InterPro" id="IPR014001">
    <property type="entry name" value="Helicase_ATP-bd"/>
</dbReference>
<dbReference type="InterPro" id="IPR001650">
    <property type="entry name" value="Helicase_C-like"/>
</dbReference>
<dbReference type="InterPro" id="IPR027417">
    <property type="entry name" value="P-loop_NTPase"/>
</dbReference>
<dbReference type="Pfam" id="PF00271">
    <property type="entry name" value="Helicase_C"/>
    <property type="match status" value="1"/>
</dbReference>
<dbReference type="Pfam" id="PF04851">
    <property type="entry name" value="ResIII"/>
    <property type="match status" value="1"/>
</dbReference>
<dbReference type="SMART" id="SM00487">
    <property type="entry name" value="DEXDc"/>
    <property type="match status" value="1"/>
</dbReference>
<dbReference type="SMART" id="SM00490">
    <property type="entry name" value="HELICc"/>
    <property type="match status" value="1"/>
</dbReference>
<dbReference type="SUPFAM" id="SSF52540">
    <property type="entry name" value="P-loop containing nucleoside triphosphate hydrolases"/>
    <property type="match status" value="1"/>
</dbReference>
<dbReference type="PROSITE" id="PS51192">
    <property type="entry name" value="HELICASE_ATP_BIND_1"/>
    <property type="match status" value="1"/>
</dbReference>
<dbReference type="PROSITE" id="PS51194">
    <property type="entry name" value="HELICASE_CTER"/>
    <property type="match status" value="1"/>
</dbReference>
<feature type="chain" id="PRO_0000448131" description="Early transcription factor 70 kDa subunit">
    <location>
        <begin position="1"/>
        <end position="637"/>
    </location>
</feature>
<feature type="domain" description="Helicase ATP-binding" evidence="2">
    <location>
        <begin position="32"/>
        <end position="185"/>
    </location>
</feature>
<feature type="domain" description="Helicase C-terminal" evidence="3">
    <location>
        <begin position="327"/>
        <end position="507"/>
    </location>
</feature>
<feature type="short sequence motif" description="DEXH box">
    <location>
        <begin position="135"/>
        <end position="138"/>
    </location>
</feature>
<feature type="binding site" evidence="2">
    <location>
        <begin position="45"/>
        <end position="52"/>
    </location>
    <ligand>
        <name>ATP</name>
        <dbReference type="ChEBI" id="CHEBI:30616"/>
    </ligand>
</feature>
<feature type="sequence variant" description="In strain: Garcia-1966.">
    <original>K</original>
    <variation>E</variation>
    <location>
        <position position="136"/>
    </location>
</feature>
<feature type="sequence variant" description="In strain: Garcia-1966.">
    <original>V</original>
    <variation>A</variation>
    <location>
        <position position="462"/>
    </location>
</feature>
<gene>
    <name type="primary">OPG118</name>
    <name type="synonym">VETFS</name>
    <name type="ORF">D6R</name>
</gene>
<organismHost>
    <name type="scientific">Homo sapiens</name>
    <name type="common">Human</name>
    <dbReference type="NCBI Taxonomy" id="9606"/>
</organismHost>
<evidence type="ECO:0000250" key="1">
    <source>
        <dbReference type="UniProtKB" id="P04308"/>
    </source>
</evidence>
<evidence type="ECO:0000255" key="2">
    <source>
        <dbReference type="PROSITE-ProRule" id="PRU00541"/>
    </source>
</evidence>
<evidence type="ECO:0000255" key="3">
    <source>
        <dbReference type="PROSITE-ProRule" id="PRU00542"/>
    </source>
</evidence>
<evidence type="ECO:0000305" key="4"/>
<protein>
    <recommendedName>
        <fullName>Early transcription factor 70 kDa subunit</fullName>
        <ecNumber>3.6.4.-</ecNumber>
    </recommendedName>
    <alternativeName>
        <fullName>ATP-dependent helicase VETFS</fullName>
    </alternativeName>
    <alternativeName>
        <fullName>ETF small subunit</fullName>
    </alternativeName>
    <alternativeName>
        <fullName>VETF D6 subunit</fullName>
    </alternativeName>
</protein>
<reference key="1">
    <citation type="journal article" date="1993" name="Nature">
        <title>Potential virulence determinants in terminal regions of variola smallpox virus genome.</title>
        <authorList>
            <person name="Massung R.F."/>
            <person name="Esposito J.J."/>
            <person name="Liu L.I."/>
            <person name="Qi J."/>
            <person name="Utterback T.R."/>
            <person name="Knight J.C."/>
            <person name="Aubin L."/>
            <person name="Yuran T.E."/>
            <person name="Parsons J.M."/>
            <person name="Loparev V.N."/>
            <person name="Selivanov N.A."/>
            <person name="Cavallaro K.F."/>
            <person name="Kerlavage A.R."/>
            <person name="Mahy B.W.J."/>
            <person name="Venter J.C."/>
        </authorList>
    </citation>
    <scope>NUCLEOTIDE SEQUENCE [GENOMIC DNA]</scope>
    <source>
        <strain>Bangladesh-1975</strain>
    </source>
</reference>
<reference key="2">
    <citation type="journal article" date="2000" name="Virology">
        <title>Alastrim smallpox variola minor virus genome DNA sequences.</title>
        <authorList>
            <person name="Shchelkunov S.N."/>
            <person name="Totmenin A.V."/>
            <person name="Loparev V.N."/>
            <person name="Safronov P.F."/>
            <person name="Gutorov V.V."/>
            <person name="Chizhikov V.E."/>
            <person name="Knight J.C."/>
            <person name="Parsons J.M."/>
            <person name="Massung R.F."/>
            <person name="Esposito J.J."/>
        </authorList>
    </citation>
    <scope>NUCLEOTIDE SEQUENCE [LARGE SCALE GENOMIC DNA]</scope>
    <source>
        <strain>Garcia-1966</strain>
    </source>
</reference>
<name>ETF1_VARV</name>
<sequence length="637" mass="73830">MNTGIIDLFDNHVDSIPTILPHQLATLDYLVRTIIDENRSVLLFHIMGSGKTIIALLFALIASRFKKVHILVPNINILKIFNYNMGVAMNLFNDEFIAENIFIHSTTSFYSLNYNDNVINYNGLSRYNNSIFIVDKAHNIFGNNTGELMTVIKNKNKIPFLLLSGSPITNTPNTLGHIIDLMSEETIDFGEIISRGKKVIQTLLNERGVNVLKDLLKGRISYYEMPDKDLPTIRYHGRKFLDTRVVYCHMSKLQERDYMITRRQLCYHEMFDKNMYNVSMAVLGQLNLMNNLDTLFQEQDKELYPNLKINNGVLYGEELVTLNISSKFKYFINRIQTLNGKHFIYFSNSTYGGLVIKYIMLSNGYSEYNGSQGTNPHMINGKPKTFAIVTSKMKSSLEDLLDVYNSPENDDGSQLMFLFSSNIMSESYTLKEVRHIWFMTIPDTFSQYNQILGRSIRKFSYVDISEPVNVYLLAAVYSDFNDEVTSLNDYTQDELINVLPFDIKKLLYLKFKTKETNRIYSILQEMSETYSLPPHPSIVKVLLGELVRQFFYNNSRIKYNDAKLLKMVTSVIKNKEDARNYIDDIVNGHFFVSNKVFDKSLLYKYENDIITVPFRLSYEPFVWGVNFRKEYNVVSSP</sequence>
<proteinExistence type="inferred from homology"/>
<comment type="function">
    <text evidence="1">Acts with RNA polymerase to initiate transcription from early gene promoters. Is recruited by the RPO-associated protein of 94 kDa RAP94/OPG109 to form the early transcription complex, which also contains the core RNA polymerase. ETF heterodimer binds to early gene promoters.</text>
</comment>
<comment type="subunit">
    <text evidence="1">Heterodimer of a 70 kDa and a 82 kDa subunit. Part of the early transcription complex composed of ETF, RAP94/OPG109, and the DNA-directed RNA polymerase.</text>
</comment>
<comment type="subcellular location">
    <subcellularLocation>
        <location evidence="1">Virion</location>
    </subcellularLocation>
    <text evidence="1">All the enzymes and other proteins required to synthesize early mRNAs are packaged within the virion core along with the DNA genome. This is necessary because viral early mRNAs are synthesized within minutes after virus entry into the cell and are extruded through pores in the core particle.</text>
</comment>
<comment type="similarity">
    <text evidence="4">Belongs to the helicase family. VETF subfamily.</text>
</comment>
<organism>
    <name type="scientific">Variola virus</name>
    <dbReference type="NCBI Taxonomy" id="10255"/>
    <lineage>
        <taxon>Viruses</taxon>
        <taxon>Varidnaviria</taxon>
        <taxon>Bamfordvirae</taxon>
        <taxon>Nucleocytoviricota</taxon>
        <taxon>Pokkesviricetes</taxon>
        <taxon>Chitovirales</taxon>
        <taxon>Poxviridae</taxon>
        <taxon>Chordopoxvirinae</taxon>
        <taxon>Orthopoxvirus</taxon>
    </lineage>
</organism>
<accession>P0DOO0</accession>
<accession>P33056</accession>
<accession>Q9QNI6</accession>
<keyword id="KW-0010">Activator</keyword>
<keyword id="KW-0067">ATP-binding</keyword>
<keyword id="KW-0238">DNA-binding</keyword>
<keyword id="KW-0347">Helicase</keyword>
<keyword id="KW-0378">Hydrolase</keyword>
<keyword id="KW-0547">Nucleotide-binding</keyword>
<keyword id="KW-0804">Transcription</keyword>
<keyword id="KW-0805">Transcription regulation</keyword>
<keyword id="KW-0946">Virion</keyword>